<sequence length="282" mass="32145">MGLEKTVKEKLSFEGVGIHTGEYSKLIIHPEKEGTGIRFFKNGVYIPARHEFVVHTNHSTDLGFKGQRIKTVEHILSVLHLLEITNVTIEVIGNEIPILDGSGWEFYEAIRKNILNQNREIDYFVVEEPIIVEDEGRLIKAEPSDTLEVTYEGEFKNFLGRQKFTFVEGNEEEIVLARTFCFDWEIEHIKKVGLGKGGSLKNTLVLGKDKVYNPEGLRYENEPVRHKVFDLIGDLYLLGSPVKGKFYSFRGGHSLNVKLVKELAKKQKLTRDLPHLPSVQAL</sequence>
<accession>O67648</accession>
<proteinExistence type="evidence at protein level"/>
<feature type="chain" id="PRO_0000191917" description="UDP-3-O-acyl-N-acetylglucosamine deacetylase">
    <location>
        <begin position="1"/>
        <end position="282"/>
    </location>
</feature>
<feature type="active site" description="Proton donor" evidence="1 5">
    <location>
        <position position="253"/>
    </location>
</feature>
<feature type="binding site" evidence="1 3 4 6 7 8">
    <location>
        <position position="74"/>
    </location>
    <ligand>
        <name>Zn(2+)</name>
        <dbReference type="ChEBI" id="CHEBI:29105"/>
    </ligand>
</feature>
<feature type="binding site" evidence="1 3 4 6 7 8">
    <location>
        <position position="226"/>
    </location>
    <ligand>
        <name>Zn(2+)</name>
        <dbReference type="ChEBI" id="CHEBI:29105"/>
    </ligand>
</feature>
<feature type="binding site" evidence="1 3 4 6 7 8">
    <location>
        <position position="230"/>
    </location>
    <ligand>
        <name>Zn(2+)</name>
        <dbReference type="ChEBI" id="CHEBI:29105"/>
    </ligand>
</feature>
<feature type="mutagenesis site" description="20-fold decrease in activity. 2-fold decrease in zinc content." evidence="2">
    <original>H</original>
    <variation>A</variation>
    <location>
        <position position="19"/>
    </location>
</feature>
<feature type="mutagenesis site" description="2-fold decrease in activity." evidence="2">
    <original>H</original>
    <variation>Q</variation>
    <location>
        <position position="19"/>
    </location>
</feature>
<feature type="mutagenesis site" description="22-fold decrease in activity." evidence="2">
    <original>H</original>
    <variation>Y</variation>
    <location>
        <position position="19"/>
    </location>
</feature>
<feature type="mutagenesis site" description="10-fold decrease in activity. 3.6-fold decrease in zinc content." evidence="2">
    <original>E</original>
    <variation>A</variation>
    <location>
        <position position="73"/>
    </location>
</feature>
<feature type="mutagenesis site" description="Loss of activity." evidence="2">
    <original>E</original>
    <variation>Q</variation>
    <location>
        <position position="73"/>
    </location>
</feature>
<feature type="mutagenesis site" description="Almost loss of activity. 10-fold decrease in zinc content." evidence="2">
    <original>H</original>
    <variation>A</variation>
    <location>
        <position position="74"/>
    </location>
</feature>
<feature type="mutagenesis site" description="Almost loss of activity." evidence="2">
    <original>H</original>
    <variation>Q</variation>
    <location>
        <position position="74"/>
    </location>
</feature>
<feature type="mutagenesis site" description="Almost no change in activity." evidence="2">
    <original>E</original>
    <variation>A</variation>
    <variation>N</variation>
    <variation>S</variation>
    <location>
        <position position="95"/>
    </location>
</feature>
<feature type="mutagenesis site" description="Almost no change in activity." evidence="2">
    <original>D</original>
    <variation>A</variation>
    <variation>N</variation>
    <variation>S</variation>
    <location>
        <position position="100"/>
    </location>
</feature>
<feature type="mutagenesis site" description="20-fold decrease in activity." evidence="2">
    <original>E</original>
    <variation>A</variation>
    <location>
        <position position="222"/>
    </location>
</feature>
<feature type="mutagenesis site" description="Loss of activity." evidence="2">
    <original>E</original>
    <variation>N</variation>
    <location>
        <position position="222"/>
    </location>
</feature>
<feature type="mutagenesis site" description="15-fold decrease in activity." evidence="2">
    <original>E</original>
    <variation>S</variation>
    <location>
        <position position="222"/>
    </location>
</feature>
<feature type="mutagenesis site" description="720-fold decrease in activity. 16.6-fold decrease in zinc content." evidence="2">
    <original>H</original>
    <variation>A</variation>
    <location>
        <position position="226"/>
    </location>
</feature>
<feature type="mutagenesis site" description="Almost loss of activity. 1.5-fold decrease in zinc content." evidence="2">
    <original>D</original>
    <variation>A</variation>
    <location>
        <position position="234"/>
    </location>
</feature>
<feature type="mutagenesis site" description="29-fold decrease in activity." evidence="2">
    <original>D</original>
    <variation>N</variation>
    <location>
        <position position="234"/>
    </location>
</feature>
<feature type="mutagenesis site" description="Loss of activity." evidence="2">
    <original>D</original>
    <variation>S</variation>
    <location>
        <position position="234"/>
    </location>
</feature>
<feature type="mutagenesis site" description="Loss of activity. 4.3-fold decrease in zinc content." evidence="2">
    <original>H</original>
    <variation>A</variation>
    <location>
        <position position="253"/>
    </location>
</feature>
<feature type="mutagenesis site" description="Loss of activity." evidence="2">
    <original>H</original>
    <variation>Q</variation>
    <location>
        <position position="253"/>
    </location>
</feature>
<feature type="strand" evidence="11">
    <location>
        <begin position="3"/>
        <end position="9"/>
    </location>
</feature>
<feature type="strand" evidence="11">
    <location>
        <begin position="11"/>
        <end position="16"/>
    </location>
</feature>
<feature type="turn" evidence="11">
    <location>
        <begin position="18"/>
        <end position="20"/>
    </location>
</feature>
<feature type="strand" evidence="11">
    <location>
        <begin position="23"/>
        <end position="30"/>
    </location>
</feature>
<feature type="strand" evidence="11">
    <location>
        <begin position="37"/>
        <end position="41"/>
    </location>
</feature>
<feature type="strand" evidence="11">
    <location>
        <begin position="44"/>
        <end position="49"/>
    </location>
</feature>
<feature type="helix" evidence="11">
    <location>
        <begin position="50"/>
        <end position="52"/>
    </location>
</feature>
<feature type="strand" evidence="11">
    <location>
        <begin position="53"/>
        <end position="55"/>
    </location>
</feature>
<feature type="strand" evidence="11">
    <location>
        <begin position="57"/>
        <end position="59"/>
    </location>
</feature>
<feature type="strand" evidence="11">
    <location>
        <begin position="61"/>
        <end position="64"/>
    </location>
</feature>
<feature type="strand" evidence="11">
    <location>
        <begin position="67"/>
        <end position="70"/>
    </location>
</feature>
<feature type="helix" evidence="11">
    <location>
        <begin position="73"/>
        <end position="82"/>
    </location>
</feature>
<feature type="strand" evidence="11">
    <location>
        <begin position="86"/>
        <end position="95"/>
    </location>
</feature>
<feature type="strand" evidence="11">
    <location>
        <begin position="101"/>
        <end position="103"/>
    </location>
</feature>
<feature type="helix" evidence="11">
    <location>
        <begin position="104"/>
        <end position="111"/>
    </location>
</feature>
<feature type="strand" evidence="11">
    <location>
        <begin position="114"/>
        <end position="120"/>
    </location>
</feature>
<feature type="strand" evidence="11">
    <location>
        <begin position="130"/>
        <end position="134"/>
    </location>
</feature>
<feature type="strand" evidence="11">
    <location>
        <begin position="137"/>
        <end position="142"/>
    </location>
</feature>
<feature type="strand" evidence="11">
    <location>
        <begin position="148"/>
        <end position="154"/>
    </location>
</feature>
<feature type="strand" evidence="11">
    <location>
        <begin position="161"/>
        <end position="167"/>
    </location>
</feature>
<feature type="helix" evidence="11">
    <location>
        <begin position="171"/>
        <end position="173"/>
    </location>
</feature>
<feature type="turn" evidence="11">
    <location>
        <begin position="174"/>
        <end position="176"/>
    </location>
</feature>
<feature type="strand" evidence="11">
    <location>
        <begin position="180"/>
        <end position="182"/>
    </location>
</feature>
<feature type="helix" evidence="11">
    <location>
        <begin position="183"/>
        <end position="191"/>
    </location>
</feature>
<feature type="turn" evidence="11">
    <location>
        <begin position="200"/>
        <end position="202"/>
    </location>
</feature>
<feature type="strand" evidence="11">
    <location>
        <begin position="204"/>
        <end position="206"/>
    </location>
</feature>
<feature type="strand" evidence="10">
    <location>
        <begin position="211"/>
        <end position="213"/>
    </location>
</feature>
<feature type="helix" evidence="11">
    <location>
        <begin position="222"/>
        <end position="235"/>
    </location>
</feature>
<feature type="helix" evidence="11">
    <location>
        <begin position="236"/>
        <end position="238"/>
    </location>
</feature>
<feature type="strand" evidence="11">
    <location>
        <begin position="245"/>
        <end position="250"/>
    </location>
</feature>
<feature type="helix" evidence="11">
    <location>
        <begin position="253"/>
        <end position="266"/>
    </location>
</feature>
<feature type="helix" evidence="9">
    <location>
        <begin position="267"/>
        <end position="269"/>
    </location>
</feature>
<reference key="1">
    <citation type="journal article" date="1998" name="Nature">
        <title>The complete genome of the hyperthermophilic bacterium Aquifex aeolicus.</title>
        <authorList>
            <person name="Deckert G."/>
            <person name="Warren P.V."/>
            <person name="Gaasterland T."/>
            <person name="Young W.G."/>
            <person name="Lenox A.L."/>
            <person name="Graham D.E."/>
            <person name="Overbeek R."/>
            <person name="Snead M.A."/>
            <person name="Keller M."/>
            <person name="Aujay M."/>
            <person name="Huber R."/>
            <person name="Feldman R.A."/>
            <person name="Short J.M."/>
            <person name="Olsen G.J."/>
            <person name="Swanson R.V."/>
        </authorList>
    </citation>
    <scope>NUCLEOTIDE SEQUENCE [LARGE SCALE GENOMIC DNA]</scope>
    <source>
        <strain>VF5</strain>
    </source>
</reference>
<reference key="2">
    <citation type="journal article" date="2001" name="Biochemistry">
        <title>Site-directed mutagenesis of the bacterial metalloamidase UDP-(3-O-acyl)-N-acetylglucosamine deacetylase (LpxC). Identification of the zinc binding site.</title>
        <authorList>
            <person name="Jackman J.E."/>
            <person name="Raetz C.R."/>
            <person name="Fierke C.A."/>
        </authorList>
    </citation>
    <scope>FUNCTION</scope>
    <scope>CATALYTIC ACTIVITY</scope>
    <scope>COFACTOR</scope>
    <scope>MUTAGENESIS OF HIS-19; GLU-73; HIS-74; GLU-95; ASP-100; GLU-222; HIS-226; ASP-234 AND HIS-253</scope>
</reference>
<reference evidence="6" key="3">
    <citation type="journal article" date="2003" name="Proc. Natl. Acad. Sci. U.S.A.">
        <title>Crystal structure of LpxC, a zinc-dependent deacetylase essential for endotoxin biosynthesis.</title>
        <authorList>
            <person name="Whittington D.A."/>
            <person name="Rusche K.M."/>
            <person name="Shin H."/>
            <person name="Fierke C.A."/>
            <person name="Christianson D.W."/>
        </authorList>
    </citation>
    <scope>X-RAY CRYSTALLOGRAPHY (2.00 ANGSTROMS) OF 2-271 IN COMPLEX WITH ZINC</scope>
</reference>
<reference evidence="7 8" key="4">
    <citation type="journal article" date="2005" name="J. Biol. Chem.">
        <title>UDP-3-O-((R)-3-hydroxymyristoyl)-N-acetylglucosamine deacetylase functions through a general acid-base catalyst pair mechanism.</title>
        <authorList>
            <person name="Hernick M."/>
            <person name="Gennadios H.A."/>
            <person name="Whittington D.A."/>
            <person name="Rusche K.M."/>
            <person name="Christianson D.W."/>
            <person name="Fierke C.A."/>
        </authorList>
    </citation>
    <scope>X-RAY CRYSTALLOGRAPHY (2.10 ANGSTROMS) OF 2-271 IN COMPLEX WITH ZINC</scope>
    <scope>CATALYTIC ACTIVITY</scope>
    <scope>ACTIVE SITE</scope>
</reference>
<comment type="function">
    <text evidence="1 2">Catalyzes the hydrolysis of UDP-3-O-myristoyl-N-acetylglucosamine to form UDP-3-O-myristoylglucosamine and acetate, the committed step in lipid A biosynthesis.</text>
</comment>
<comment type="catalytic activity">
    <reaction evidence="1 2 4">
        <text>a UDP-3-O-[(3R)-3-hydroxyacyl]-N-acetyl-alpha-D-glucosamine + H2O = a UDP-3-O-[(3R)-3-hydroxyacyl]-alpha-D-glucosamine + acetate</text>
        <dbReference type="Rhea" id="RHEA:67816"/>
        <dbReference type="ChEBI" id="CHEBI:15377"/>
        <dbReference type="ChEBI" id="CHEBI:30089"/>
        <dbReference type="ChEBI" id="CHEBI:137740"/>
        <dbReference type="ChEBI" id="CHEBI:173225"/>
        <dbReference type="EC" id="3.5.1.108"/>
    </reaction>
</comment>
<comment type="cofactor">
    <cofactor evidence="1 2">
        <name>Zn(2+)</name>
        <dbReference type="ChEBI" id="CHEBI:29105"/>
    </cofactor>
</comment>
<comment type="pathway">
    <text evidence="1">Glycolipid biosynthesis; lipid IV(A) biosynthesis; lipid IV(A) from (3R)-3-hydroxytetradecanoyl-[acyl-carrier-protein] and UDP-N-acetyl-alpha-D-glucosamine: step 2/6.</text>
</comment>
<comment type="similarity">
    <text evidence="1">Belongs to the LpxC family.</text>
</comment>
<evidence type="ECO:0000255" key="1">
    <source>
        <dbReference type="HAMAP-Rule" id="MF_00388"/>
    </source>
</evidence>
<evidence type="ECO:0000269" key="2">
    <source>
    </source>
</evidence>
<evidence type="ECO:0000269" key="3">
    <source>
    </source>
</evidence>
<evidence type="ECO:0000269" key="4">
    <source>
    </source>
</evidence>
<evidence type="ECO:0000305" key="5">
    <source>
    </source>
</evidence>
<evidence type="ECO:0007744" key="6">
    <source>
        <dbReference type="PDB" id="1P42"/>
    </source>
</evidence>
<evidence type="ECO:0007744" key="7">
    <source>
        <dbReference type="PDB" id="1YH8"/>
    </source>
</evidence>
<evidence type="ECO:0007744" key="8">
    <source>
        <dbReference type="PDB" id="1YHC"/>
    </source>
</evidence>
<evidence type="ECO:0007829" key="9">
    <source>
        <dbReference type="PDB" id="1XXE"/>
    </source>
</evidence>
<evidence type="ECO:0007829" key="10">
    <source>
        <dbReference type="PDB" id="5DRO"/>
    </source>
</evidence>
<evidence type="ECO:0007829" key="11">
    <source>
        <dbReference type="PDB" id="6IH0"/>
    </source>
</evidence>
<dbReference type="EC" id="3.5.1.108" evidence="1 2 4"/>
<dbReference type="EMBL" id="AE000657">
    <property type="protein sequence ID" value="AAC07605.1"/>
    <property type="molecule type" value="Genomic_DNA"/>
</dbReference>
<dbReference type="PIR" id="F70452">
    <property type="entry name" value="F70452"/>
</dbReference>
<dbReference type="RefSeq" id="NP_214214.1">
    <property type="nucleotide sequence ID" value="NC_000918.1"/>
</dbReference>
<dbReference type="RefSeq" id="WP_010881151.1">
    <property type="nucleotide sequence ID" value="NC_000918.1"/>
</dbReference>
<dbReference type="PDB" id="1P42">
    <property type="method" value="X-ray"/>
    <property type="resolution" value="2.00 A"/>
    <property type="chains" value="A/B=2-271"/>
</dbReference>
<dbReference type="PDB" id="1XXE">
    <property type="method" value="NMR"/>
    <property type="chains" value="A=1-282"/>
</dbReference>
<dbReference type="PDB" id="1YH8">
    <property type="method" value="X-ray"/>
    <property type="resolution" value="2.70 A"/>
    <property type="chains" value="A/B=2-271"/>
</dbReference>
<dbReference type="PDB" id="1YHC">
    <property type="method" value="X-ray"/>
    <property type="resolution" value="2.10 A"/>
    <property type="chains" value="A/B=2-271"/>
</dbReference>
<dbReference type="PDB" id="2GO3">
    <property type="method" value="X-ray"/>
    <property type="resolution" value="2.00 A"/>
    <property type="chains" value="A/B=1-267"/>
</dbReference>
<dbReference type="PDB" id="2GO4">
    <property type="method" value="X-ray"/>
    <property type="resolution" value="2.70 A"/>
    <property type="chains" value="A/B=1-267"/>
</dbReference>
<dbReference type="PDB" id="2IER">
    <property type="method" value="X-ray"/>
    <property type="resolution" value="2.70 A"/>
    <property type="chains" value="A/B=1-271"/>
</dbReference>
<dbReference type="PDB" id="2IES">
    <property type="method" value="X-ray"/>
    <property type="resolution" value="3.10 A"/>
    <property type="chains" value="A/B=1-271"/>
</dbReference>
<dbReference type="PDB" id="2J65">
    <property type="method" value="X-ray"/>
    <property type="resolution" value="2.20 A"/>
    <property type="chains" value="A/B=1-271"/>
</dbReference>
<dbReference type="PDB" id="2JT2">
    <property type="method" value="NMR"/>
    <property type="chains" value="A=1-274"/>
</dbReference>
<dbReference type="PDB" id="2O3Z">
    <property type="method" value="X-ray"/>
    <property type="resolution" value="2.25 A"/>
    <property type="chains" value="A/B=1-271"/>
</dbReference>
<dbReference type="PDB" id="3P3C">
    <property type="method" value="X-ray"/>
    <property type="resolution" value="1.25 A"/>
    <property type="chains" value="A=2-275"/>
</dbReference>
<dbReference type="PDB" id="3P76">
    <property type="method" value="X-ray"/>
    <property type="resolution" value="1.93 A"/>
    <property type="chains" value="A=1-271"/>
</dbReference>
<dbReference type="PDB" id="4OZE">
    <property type="method" value="X-ray"/>
    <property type="resolution" value="1.61 A"/>
    <property type="chains" value="A/B=1-282"/>
</dbReference>
<dbReference type="PDB" id="4U3B">
    <property type="method" value="X-ray"/>
    <property type="resolution" value="1.34 A"/>
    <property type="chains" value="A=1-271"/>
</dbReference>
<dbReference type="PDB" id="4U3D">
    <property type="method" value="X-ray"/>
    <property type="resolution" value="1.25 A"/>
    <property type="chains" value="A=1-271"/>
</dbReference>
<dbReference type="PDB" id="5DRO">
    <property type="method" value="X-ray"/>
    <property type="resolution" value="2.01 A"/>
    <property type="chains" value="A/B=1-274"/>
</dbReference>
<dbReference type="PDB" id="5DRP">
    <property type="method" value="X-ray"/>
    <property type="resolution" value="1.89 A"/>
    <property type="chains" value="A/B=1-274"/>
</dbReference>
<dbReference type="PDB" id="5U86">
    <property type="method" value="X-ray"/>
    <property type="resolution" value="1.62 A"/>
    <property type="chains" value="A=1-275"/>
</dbReference>
<dbReference type="PDB" id="6IH0">
    <property type="method" value="X-ray"/>
    <property type="resolution" value="1.21 A"/>
    <property type="chains" value="A=1-271"/>
</dbReference>
<dbReference type="PDBsum" id="1P42"/>
<dbReference type="PDBsum" id="1XXE"/>
<dbReference type="PDBsum" id="1YH8"/>
<dbReference type="PDBsum" id="1YHC"/>
<dbReference type="PDBsum" id="2GO3"/>
<dbReference type="PDBsum" id="2GO4"/>
<dbReference type="PDBsum" id="2IER"/>
<dbReference type="PDBsum" id="2IES"/>
<dbReference type="PDBsum" id="2J65"/>
<dbReference type="PDBsum" id="2JT2"/>
<dbReference type="PDBsum" id="2O3Z"/>
<dbReference type="PDBsum" id="3P3C"/>
<dbReference type="PDBsum" id="3P76"/>
<dbReference type="PDBsum" id="4OZE"/>
<dbReference type="PDBsum" id="4U3B"/>
<dbReference type="PDBsum" id="4U3D"/>
<dbReference type="PDBsum" id="5DRO"/>
<dbReference type="PDBsum" id="5DRP"/>
<dbReference type="PDBsum" id="5U86"/>
<dbReference type="PDBsum" id="6IH0"/>
<dbReference type="BMRB" id="O67648"/>
<dbReference type="SMR" id="O67648"/>
<dbReference type="FunCoup" id="O67648">
    <property type="interactions" value="359"/>
</dbReference>
<dbReference type="STRING" id="224324.aq_1772"/>
<dbReference type="BindingDB" id="O67648"/>
<dbReference type="ChEMBL" id="CHEMBL1075040"/>
<dbReference type="DrugBank" id="DB07355">
    <property type="generic name" value="3-(heptyloxy)benzoic acid"/>
</dbReference>
<dbReference type="DrugBank" id="DB08231">
    <property type="generic name" value="Myristic acid"/>
</dbReference>
<dbReference type="DrugBank" id="DB07536">
    <property type="generic name" value="N-{(1S,2R)-2-hydroxy-1-[(hydroxyamino)carbonyl]propyl}-4-{[4-(morpholin-4-ylmethyl)phenyl]ethynyl}benzamide"/>
</dbReference>
<dbReference type="DrugBank" id="DB04257">
    <property type="generic name" value="Palmitoleic Acid"/>
</dbReference>
<dbReference type="DrugBank" id="DB01991">
    <property type="generic name" value="TU-514"/>
</dbReference>
<dbReference type="EnsemblBacteria" id="AAC07605">
    <property type="protein sequence ID" value="AAC07605"/>
    <property type="gene ID" value="aq_1772"/>
</dbReference>
<dbReference type="KEGG" id="aae:aq_1772"/>
<dbReference type="PATRIC" id="fig|224324.8.peg.1368"/>
<dbReference type="eggNOG" id="COG0774">
    <property type="taxonomic scope" value="Bacteria"/>
</dbReference>
<dbReference type="HOGENOM" id="CLU_046528_1_0_0"/>
<dbReference type="InParanoid" id="O67648"/>
<dbReference type="OrthoDB" id="9772788at2"/>
<dbReference type="BRENDA" id="3.5.1.108">
    <property type="organism ID" value="396"/>
</dbReference>
<dbReference type="UniPathway" id="UPA00359">
    <property type="reaction ID" value="UER00478"/>
</dbReference>
<dbReference type="EvolutionaryTrace" id="O67648"/>
<dbReference type="Proteomes" id="UP000000798">
    <property type="component" value="Chromosome"/>
</dbReference>
<dbReference type="GO" id="GO:0016020">
    <property type="term" value="C:membrane"/>
    <property type="evidence" value="ECO:0007669"/>
    <property type="project" value="GOC"/>
</dbReference>
<dbReference type="GO" id="GO:0046872">
    <property type="term" value="F:metal ion binding"/>
    <property type="evidence" value="ECO:0007669"/>
    <property type="project" value="UniProtKB-KW"/>
</dbReference>
<dbReference type="GO" id="GO:0103117">
    <property type="term" value="F:UDP-3-O-acyl-N-acetylglucosamine deacetylase activity"/>
    <property type="evidence" value="ECO:0007669"/>
    <property type="project" value="UniProtKB-UniRule"/>
</dbReference>
<dbReference type="GO" id="GO:0009245">
    <property type="term" value="P:lipid A biosynthetic process"/>
    <property type="evidence" value="ECO:0007669"/>
    <property type="project" value="UniProtKB-UniRule"/>
</dbReference>
<dbReference type="Gene3D" id="3.30.230.20">
    <property type="entry name" value="lpxc deacetylase, domain 1"/>
    <property type="match status" value="1"/>
</dbReference>
<dbReference type="Gene3D" id="3.30.1700.10">
    <property type="entry name" value="lpxc deacetylase, domain 2"/>
    <property type="match status" value="1"/>
</dbReference>
<dbReference type="HAMAP" id="MF_00388">
    <property type="entry name" value="LpxC"/>
    <property type="match status" value="1"/>
</dbReference>
<dbReference type="InterPro" id="IPR020568">
    <property type="entry name" value="Ribosomal_Su5_D2-typ_SF"/>
</dbReference>
<dbReference type="InterPro" id="IPR004463">
    <property type="entry name" value="UDP-acyl_GlcNac_deAcase"/>
</dbReference>
<dbReference type="InterPro" id="IPR011334">
    <property type="entry name" value="UDP-acyl_GlcNac_deAcase_C"/>
</dbReference>
<dbReference type="InterPro" id="IPR015870">
    <property type="entry name" value="UDP-acyl_N-AcGlcN_deAcase_N"/>
</dbReference>
<dbReference type="NCBIfam" id="TIGR00325">
    <property type="entry name" value="lpxC"/>
    <property type="match status" value="1"/>
</dbReference>
<dbReference type="PANTHER" id="PTHR33694">
    <property type="entry name" value="UDP-3-O-ACYL-N-ACETYLGLUCOSAMINE DEACETYLASE 1, MITOCHONDRIAL-RELATED"/>
    <property type="match status" value="1"/>
</dbReference>
<dbReference type="PANTHER" id="PTHR33694:SF1">
    <property type="entry name" value="UDP-3-O-ACYL-N-ACETYLGLUCOSAMINE DEACETYLASE 1, MITOCHONDRIAL-RELATED"/>
    <property type="match status" value="1"/>
</dbReference>
<dbReference type="Pfam" id="PF03331">
    <property type="entry name" value="LpxC"/>
    <property type="match status" value="1"/>
</dbReference>
<dbReference type="SUPFAM" id="SSF54211">
    <property type="entry name" value="Ribosomal protein S5 domain 2-like"/>
    <property type="match status" value="2"/>
</dbReference>
<organism>
    <name type="scientific">Aquifex aeolicus (strain VF5)</name>
    <dbReference type="NCBI Taxonomy" id="224324"/>
    <lineage>
        <taxon>Bacteria</taxon>
        <taxon>Pseudomonadati</taxon>
        <taxon>Aquificota</taxon>
        <taxon>Aquificia</taxon>
        <taxon>Aquificales</taxon>
        <taxon>Aquificaceae</taxon>
        <taxon>Aquifex</taxon>
    </lineage>
</organism>
<protein>
    <recommendedName>
        <fullName evidence="1">UDP-3-O-acyl-N-acetylglucosamine deacetylase</fullName>
        <shortName evidence="1">UDP-3-O-acyl-GlcNAc deacetylase</shortName>
        <ecNumber evidence="1 2 4">3.5.1.108</ecNumber>
    </recommendedName>
    <alternativeName>
        <fullName evidence="1">UDP-3-O-[R-3-hydroxymyristoyl]-N-acetylglucosamine deacetylase</fullName>
    </alternativeName>
</protein>
<gene>
    <name evidence="1" type="primary">lpxC</name>
    <name type="synonym">envA</name>
    <name type="ordered locus">aq_1772</name>
</gene>
<name>LPXC_AQUAE</name>
<keyword id="KW-0002">3D-structure</keyword>
<keyword id="KW-0378">Hydrolase</keyword>
<keyword id="KW-0441">Lipid A biosynthesis</keyword>
<keyword id="KW-0444">Lipid biosynthesis</keyword>
<keyword id="KW-0443">Lipid metabolism</keyword>
<keyword id="KW-0479">Metal-binding</keyword>
<keyword id="KW-1185">Reference proteome</keyword>
<keyword id="KW-0862">Zinc</keyword>